<sequence length="37" mass="4379">MKVRASVKKMCDKCRVIRRHGRVMVICTNPKHKQRQG</sequence>
<gene>
    <name evidence="1" type="primary">rpmJ</name>
    <name type="ordered locus">Syncc9902_1975</name>
</gene>
<reference key="1">
    <citation type="submission" date="2005-08" db="EMBL/GenBank/DDBJ databases">
        <title>Complete sequence of Synechococcus sp. CC9902.</title>
        <authorList>
            <person name="Copeland A."/>
            <person name="Lucas S."/>
            <person name="Lapidus A."/>
            <person name="Barry K."/>
            <person name="Detter J.C."/>
            <person name="Glavina T."/>
            <person name="Hammon N."/>
            <person name="Israni S."/>
            <person name="Pitluck S."/>
            <person name="Martinez M."/>
            <person name="Schmutz J."/>
            <person name="Larimer F."/>
            <person name="Land M."/>
            <person name="Kyrpides N."/>
            <person name="Ivanova N."/>
            <person name="Richardson P."/>
        </authorList>
    </citation>
    <scope>NUCLEOTIDE SEQUENCE [LARGE SCALE GENOMIC DNA]</scope>
    <source>
        <strain>CC9902</strain>
    </source>
</reference>
<proteinExistence type="inferred from homology"/>
<dbReference type="EMBL" id="CP000097">
    <property type="protein sequence ID" value="ABB26933.1"/>
    <property type="molecule type" value="Genomic_DNA"/>
</dbReference>
<dbReference type="RefSeq" id="WP_006173336.1">
    <property type="nucleotide sequence ID" value="NC_007513.1"/>
</dbReference>
<dbReference type="SMR" id="Q3AW73"/>
<dbReference type="STRING" id="316279.Syncc9902_1975"/>
<dbReference type="KEGG" id="sye:Syncc9902_1975"/>
<dbReference type="eggNOG" id="COG0257">
    <property type="taxonomic scope" value="Bacteria"/>
</dbReference>
<dbReference type="HOGENOM" id="CLU_135723_6_2_3"/>
<dbReference type="OrthoDB" id="9802520at2"/>
<dbReference type="Proteomes" id="UP000002712">
    <property type="component" value="Chromosome"/>
</dbReference>
<dbReference type="GO" id="GO:0005737">
    <property type="term" value="C:cytoplasm"/>
    <property type="evidence" value="ECO:0007669"/>
    <property type="project" value="UniProtKB-ARBA"/>
</dbReference>
<dbReference type="GO" id="GO:1990904">
    <property type="term" value="C:ribonucleoprotein complex"/>
    <property type="evidence" value="ECO:0007669"/>
    <property type="project" value="UniProtKB-KW"/>
</dbReference>
<dbReference type="GO" id="GO:0005840">
    <property type="term" value="C:ribosome"/>
    <property type="evidence" value="ECO:0007669"/>
    <property type="project" value="UniProtKB-KW"/>
</dbReference>
<dbReference type="GO" id="GO:0003735">
    <property type="term" value="F:structural constituent of ribosome"/>
    <property type="evidence" value="ECO:0007669"/>
    <property type="project" value="InterPro"/>
</dbReference>
<dbReference type="GO" id="GO:0006412">
    <property type="term" value="P:translation"/>
    <property type="evidence" value="ECO:0007669"/>
    <property type="project" value="UniProtKB-UniRule"/>
</dbReference>
<dbReference type="HAMAP" id="MF_00251">
    <property type="entry name" value="Ribosomal_bL36"/>
    <property type="match status" value="1"/>
</dbReference>
<dbReference type="InterPro" id="IPR000473">
    <property type="entry name" value="Ribosomal_bL36"/>
</dbReference>
<dbReference type="InterPro" id="IPR035977">
    <property type="entry name" value="Ribosomal_bL36_sp"/>
</dbReference>
<dbReference type="NCBIfam" id="TIGR01022">
    <property type="entry name" value="rpmJ_bact"/>
    <property type="match status" value="1"/>
</dbReference>
<dbReference type="PANTHER" id="PTHR42888">
    <property type="entry name" value="50S RIBOSOMAL PROTEIN L36, CHLOROPLASTIC"/>
    <property type="match status" value="1"/>
</dbReference>
<dbReference type="PANTHER" id="PTHR42888:SF1">
    <property type="entry name" value="LARGE RIBOSOMAL SUBUNIT PROTEIN BL36C"/>
    <property type="match status" value="1"/>
</dbReference>
<dbReference type="Pfam" id="PF00444">
    <property type="entry name" value="Ribosomal_L36"/>
    <property type="match status" value="1"/>
</dbReference>
<dbReference type="SUPFAM" id="SSF57840">
    <property type="entry name" value="Ribosomal protein L36"/>
    <property type="match status" value="1"/>
</dbReference>
<dbReference type="PROSITE" id="PS00828">
    <property type="entry name" value="RIBOSOMAL_L36"/>
    <property type="match status" value="1"/>
</dbReference>
<organism>
    <name type="scientific">Synechococcus sp. (strain CC9902)</name>
    <dbReference type="NCBI Taxonomy" id="316279"/>
    <lineage>
        <taxon>Bacteria</taxon>
        <taxon>Bacillati</taxon>
        <taxon>Cyanobacteriota</taxon>
        <taxon>Cyanophyceae</taxon>
        <taxon>Synechococcales</taxon>
        <taxon>Synechococcaceae</taxon>
        <taxon>Synechococcus</taxon>
    </lineage>
</organism>
<name>RL36_SYNS9</name>
<feature type="chain" id="PRO_0000302319" description="Large ribosomal subunit protein bL36">
    <location>
        <begin position="1"/>
        <end position="37"/>
    </location>
</feature>
<protein>
    <recommendedName>
        <fullName evidence="1">Large ribosomal subunit protein bL36</fullName>
    </recommendedName>
    <alternativeName>
        <fullName evidence="2">50S ribosomal protein L36</fullName>
    </alternativeName>
</protein>
<keyword id="KW-1185">Reference proteome</keyword>
<keyword id="KW-0687">Ribonucleoprotein</keyword>
<keyword id="KW-0689">Ribosomal protein</keyword>
<evidence type="ECO:0000255" key="1">
    <source>
        <dbReference type="HAMAP-Rule" id="MF_00251"/>
    </source>
</evidence>
<evidence type="ECO:0000305" key="2"/>
<comment type="similarity">
    <text evidence="1">Belongs to the bacterial ribosomal protein bL36 family.</text>
</comment>
<accession>Q3AW73</accession>